<dbReference type="EC" id="3.6.1.41" evidence="1"/>
<dbReference type="EMBL" id="CP000103">
    <property type="protein sequence ID" value="ABB73514.1"/>
    <property type="molecule type" value="Genomic_DNA"/>
</dbReference>
<dbReference type="RefSeq" id="WP_011379568.1">
    <property type="nucleotide sequence ID" value="NC_007614.1"/>
</dbReference>
<dbReference type="SMR" id="Q2YCK7"/>
<dbReference type="STRING" id="323848.Nmul_A0206"/>
<dbReference type="KEGG" id="nmu:Nmul_A0206"/>
<dbReference type="eggNOG" id="COG0639">
    <property type="taxonomic scope" value="Bacteria"/>
</dbReference>
<dbReference type="HOGENOM" id="CLU_056184_2_0_4"/>
<dbReference type="OrthoDB" id="9807890at2"/>
<dbReference type="Proteomes" id="UP000002718">
    <property type="component" value="Chromosome"/>
</dbReference>
<dbReference type="GO" id="GO:0008803">
    <property type="term" value="F:bis(5'-nucleosyl)-tetraphosphatase (symmetrical) activity"/>
    <property type="evidence" value="ECO:0007669"/>
    <property type="project" value="UniProtKB-UniRule"/>
</dbReference>
<dbReference type="CDD" id="cd07422">
    <property type="entry name" value="MPP_ApaH"/>
    <property type="match status" value="1"/>
</dbReference>
<dbReference type="Gene3D" id="3.60.21.10">
    <property type="match status" value="1"/>
</dbReference>
<dbReference type="HAMAP" id="MF_00199">
    <property type="entry name" value="ApaH"/>
    <property type="match status" value="1"/>
</dbReference>
<dbReference type="InterPro" id="IPR004617">
    <property type="entry name" value="ApaH"/>
</dbReference>
<dbReference type="InterPro" id="IPR004843">
    <property type="entry name" value="Calcineurin-like_PHP_ApaH"/>
</dbReference>
<dbReference type="InterPro" id="IPR029052">
    <property type="entry name" value="Metallo-depent_PP-like"/>
</dbReference>
<dbReference type="NCBIfam" id="TIGR00668">
    <property type="entry name" value="apaH"/>
    <property type="match status" value="1"/>
</dbReference>
<dbReference type="NCBIfam" id="NF001204">
    <property type="entry name" value="PRK00166.1"/>
    <property type="match status" value="1"/>
</dbReference>
<dbReference type="PANTHER" id="PTHR40942">
    <property type="match status" value="1"/>
</dbReference>
<dbReference type="PANTHER" id="PTHR40942:SF4">
    <property type="entry name" value="CYTOCHROME C5"/>
    <property type="match status" value="1"/>
</dbReference>
<dbReference type="Pfam" id="PF00149">
    <property type="entry name" value="Metallophos"/>
    <property type="match status" value="1"/>
</dbReference>
<dbReference type="PIRSF" id="PIRSF000903">
    <property type="entry name" value="B5n-ttraPtase_sm"/>
    <property type="match status" value="1"/>
</dbReference>
<dbReference type="SUPFAM" id="SSF56300">
    <property type="entry name" value="Metallo-dependent phosphatases"/>
    <property type="match status" value="1"/>
</dbReference>
<organism>
    <name type="scientific">Nitrosospira multiformis (strain ATCC 25196 / NCIMB 11849 / C 71)</name>
    <dbReference type="NCBI Taxonomy" id="323848"/>
    <lineage>
        <taxon>Bacteria</taxon>
        <taxon>Pseudomonadati</taxon>
        <taxon>Pseudomonadota</taxon>
        <taxon>Betaproteobacteria</taxon>
        <taxon>Nitrosomonadales</taxon>
        <taxon>Nitrosomonadaceae</taxon>
        <taxon>Nitrosospira</taxon>
    </lineage>
</organism>
<accession>Q2YCK7</accession>
<gene>
    <name evidence="1" type="primary">apaH</name>
    <name type="ordered locus">Nmul_A0206</name>
</gene>
<comment type="function">
    <text evidence="1">Hydrolyzes diadenosine 5',5'''-P1,P4-tetraphosphate to yield ADP.</text>
</comment>
<comment type="catalytic activity">
    <reaction evidence="1">
        <text>P(1),P(4)-bis(5'-adenosyl) tetraphosphate + H2O = 2 ADP + 2 H(+)</text>
        <dbReference type="Rhea" id="RHEA:24252"/>
        <dbReference type="ChEBI" id="CHEBI:15377"/>
        <dbReference type="ChEBI" id="CHEBI:15378"/>
        <dbReference type="ChEBI" id="CHEBI:58141"/>
        <dbReference type="ChEBI" id="CHEBI:456216"/>
        <dbReference type="EC" id="3.6.1.41"/>
    </reaction>
</comment>
<comment type="similarity">
    <text evidence="1">Belongs to the Ap4A hydrolase family.</text>
</comment>
<sequence>MAIYAVGDLQGCYREFRELLDLVRFDETKDKLWLVGDLVNRGPDSLSVLRFVKELNDSAIMVLGNHDLHLLLVAEGCAELSRSDTLQNILDAPDRDELLDWLRRQKLLHVDGNYVMVHAGLLPSWSIEQAQVLAALVESALRGSEFHEFCRQMYGNRPDHWNETLHGYERLRVIVNAMTRMRVCTPHGRMDFAHKGSVKDIPPGYLPWFDVPERASRKATVICGHWSALGLEIRANLMALDTGCLWGGSLTAVRLEDRKVFQTECGAGGATRHWQ</sequence>
<reference key="1">
    <citation type="submission" date="2005-08" db="EMBL/GenBank/DDBJ databases">
        <title>Complete sequence of chromosome 1 of Nitrosospira multiformis ATCC 25196.</title>
        <authorList>
            <person name="Copeland A."/>
            <person name="Lucas S."/>
            <person name="Lapidus A."/>
            <person name="Barry K."/>
            <person name="Detter J.C."/>
            <person name="Glavina T."/>
            <person name="Hammon N."/>
            <person name="Israni S."/>
            <person name="Pitluck S."/>
            <person name="Chain P."/>
            <person name="Malfatti S."/>
            <person name="Shin M."/>
            <person name="Vergez L."/>
            <person name="Schmutz J."/>
            <person name="Larimer F."/>
            <person name="Land M."/>
            <person name="Hauser L."/>
            <person name="Kyrpides N."/>
            <person name="Lykidis A."/>
            <person name="Richardson P."/>
        </authorList>
    </citation>
    <scope>NUCLEOTIDE SEQUENCE [LARGE SCALE GENOMIC DNA]</scope>
    <source>
        <strain>ATCC 25196 / NCIMB 11849 / C 71</strain>
    </source>
</reference>
<proteinExistence type="inferred from homology"/>
<evidence type="ECO:0000255" key="1">
    <source>
        <dbReference type="HAMAP-Rule" id="MF_00199"/>
    </source>
</evidence>
<name>APAH_NITMU</name>
<protein>
    <recommendedName>
        <fullName evidence="1">Bis(5'-nucleosyl)-tetraphosphatase, symmetrical</fullName>
        <ecNumber evidence="1">3.6.1.41</ecNumber>
    </recommendedName>
    <alternativeName>
        <fullName evidence="1">Ap4A hydrolase</fullName>
    </alternativeName>
    <alternativeName>
        <fullName evidence="1">Diadenosine 5',5'''-P1,P4-tetraphosphate pyrophosphohydrolase</fullName>
    </alternativeName>
    <alternativeName>
        <fullName evidence="1">Diadenosine tetraphosphatase</fullName>
    </alternativeName>
</protein>
<feature type="chain" id="PRO_1000012072" description="Bis(5'-nucleosyl)-tetraphosphatase, symmetrical">
    <location>
        <begin position="1"/>
        <end position="275"/>
    </location>
</feature>
<keyword id="KW-0378">Hydrolase</keyword>
<keyword id="KW-1185">Reference proteome</keyword>